<accession>Q5NII9</accession>
<comment type="function">
    <text evidence="1">Catalyzes a salvage reaction resulting in the formation of AMP, that is energically less costly than de novo synthesis.</text>
</comment>
<comment type="catalytic activity">
    <reaction evidence="1">
        <text>AMP + diphosphate = 5-phospho-alpha-D-ribose 1-diphosphate + adenine</text>
        <dbReference type="Rhea" id="RHEA:16609"/>
        <dbReference type="ChEBI" id="CHEBI:16708"/>
        <dbReference type="ChEBI" id="CHEBI:33019"/>
        <dbReference type="ChEBI" id="CHEBI:58017"/>
        <dbReference type="ChEBI" id="CHEBI:456215"/>
        <dbReference type="EC" id="2.4.2.7"/>
    </reaction>
</comment>
<comment type="pathway">
    <text evidence="1">Purine metabolism; AMP biosynthesis via salvage pathway; AMP from adenine: step 1/1.</text>
</comment>
<comment type="subunit">
    <text evidence="1">Homodimer.</text>
</comment>
<comment type="subcellular location">
    <subcellularLocation>
        <location evidence="1">Cytoplasm</location>
    </subcellularLocation>
</comment>
<comment type="similarity">
    <text evidence="1">Belongs to the purine/pyrimidine phosphoribosyltransferase family.</text>
</comment>
<organism>
    <name type="scientific">Francisella tularensis subsp. tularensis (strain SCHU S4 / Schu 4)</name>
    <dbReference type="NCBI Taxonomy" id="177416"/>
    <lineage>
        <taxon>Bacteria</taxon>
        <taxon>Pseudomonadati</taxon>
        <taxon>Pseudomonadota</taxon>
        <taxon>Gammaproteobacteria</taxon>
        <taxon>Thiotrichales</taxon>
        <taxon>Francisellaceae</taxon>
        <taxon>Francisella</taxon>
    </lineage>
</organism>
<protein>
    <recommendedName>
        <fullName evidence="1">Adenine phosphoribosyltransferase</fullName>
        <shortName evidence="1">APRT</shortName>
        <ecNumber evidence="1">2.4.2.7</ecNumber>
    </recommendedName>
</protein>
<name>APT_FRATT</name>
<feature type="chain" id="PRO_0000149384" description="Adenine phosphoribosyltransferase">
    <location>
        <begin position="1"/>
        <end position="175"/>
    </location>
</feature>
<feature type="helix" evidence="2">
    <location>
        <begin position="1"/>
        <end position="7"/>
    </location>
</feature>
<feature type="strand" evidence="2">
    <location>
        <begin position="11"/>
        <end position="13"/>
    </location>
</feature>
<feature type="strand" evidence="2">
    <location>
        <begin position="23"/>
        <end position="25"/>
    </location>
</feature>
<feature type="helix" evidence="2">
    <location>
        <begin position="27"/>
        <end position="31"/>
    </location>
</feature>
<feature type="helix" evidence="2">
    <location>
        <begin position="35"/>
        <end position="49"/>
    </location>
</feature>
<feature type="strand" evidence="2">
    <location>
        <begin position="55"/>
        <end position="60"/>
    </location>
</feature>
<feature type="helix" evidence="2">
    <location>
        <begin position="63"/>
        <end position="75"/>
    </location>
</feature>
<feature type="strand" evidence="2">
    <location>
        <begin position="78"/>
        <end position="83"/>
    </location>
</feature>
<feature type="strand" evidence="2">
    <location>
        <begin position="92"/>
        <end position="98"/>
    </location>
</feature>
<feature type="strand" evidence="2">
    <location>
        <begin position="100"/>
        <end position="109"/>
    </location>
</feature>
<feature type="strand" evidence="2">
    <location>
        <begin position="118"/>
        <end position="128"/>
    </location>
</feature>
<feature type="helix" evidence="2">
    <location>
        <begin position="130"/>
        <end position="141"/>
    </location>
</feature>
<feature type="strand" evidence="2">
    <location>
        <begin position="145"/>
        <end position="155"/>
    </location>
</feature>
<feature type="helix" evidence="2">
    <location>
        <begin position="160"/>
        <end position="163"/>
    </location>
</feature>
<feature type="turn" evidence="2">
    <location>
        <begin position="164"/>
        <end position="166"/>
    </location>
</feature>
<feature type="strand" evidence="2">
    <location>
        <begin position="169"/>
        <end position="175"/>
    </location>
</feature>
<dbReference type="EC" id="2.4.2.7" evidence="1"/>
<dbReference type="EMBL" id="AJ749949">
    <property type="protein sequence ID" value="CAG44711.1"/>
    <property type="molecule type" value="Genomic_DNA"/>
</dbReference>
<dbReference type="RefSeq" id="WP_003028608.1">
    <property type="nucleotide sequence ID" value="NC_006570.2"/>
</dbReference>
<dbReference type="RefSeq" id="YP_169153.1">
    <property type="nucleotide sequence ID" value="NC_006570.2"/>
</dbReference>
<dbReference type="PDB" id="5YW2">
    <property type="method" value="X-ray"/>
    <property type="resolution" value="2.28 A"/>
    <property type="chains" value="A/B/C/D=1-175"/>
</dbReference>
<dbReference type="PDB" id="5YW5">
    <property type="method" value="X-ray"/>
    <property type="resolution" value="1.90 A"/>
    <property type="chains" value="A/B/C/D=1-175"/>
</dbReference>
<dbReference type="PDBsum" id="5YW2"/>
<dbReference type="PDBsum" id="5YW5"/>
<dbReference type="SMR" id="Q5NII9"/>
<dbReference type="STRING" id="177416.FTT_0078"/>
<dbReference type="DNASU" id="3191768"/>
<dbReference type="EnsemblBacteria" id="CAG44711">
    <property type="protein sequence ID" value="CAG44711"/>
    <property type="gene ID" value="FTT_0078"/>
</dbReference>
<dbReference type="KEGG" id="ftu:FTT_0078"/>
<dbReference type="eggNOG" id="COG0503">
    <property type="taxonomic scope" value="Bacteria"/>
</dbReference>
<dbReference type="OrthoDB" id="9803963at2"/>
<dbReference type="BRENDA" id="2.4.2.7">
    <property type="organism ID" value="14771"/>
</dbReference>
<dbReference type="UniPathway" id="UPA00588">
    <property type="reaction ID" value="UER00646"/>
</dbReference>
<dbReference type="Proteomes" id="UP000001174">
    <property type="component" value="Chromosome"/>
</dbReference>
<dbReference type="GO" id="GO:0005737">
    <property type="term" value="C:cytoplasm"/>
    <property type="evidence" value="ECO:0007669"/>
    <property type="project" value="UniProtKB-SubCell"/>
</dbReference>
<dbReference type="GO" id="GO:0002055">
    <property type="term" value="F:adenine binding"/>
    <property type="evidence" value="ECO:0007669"/>
    <property type="project" value="TreeGrafter"/>
</dbReference>
<dbReference type="GO" id="GO:0003999">
    <property type="term" value="F:adenine phosphoribosyltransferase activity"/>
    <property type="evidence" value="ECO:0007669"/>
    <property type="project" value="UniProtKB-UniRule"/>
</dbReference>
<dbReference type="GO" id="GO:0016208">
    <property type="term" value="F:AMP binding"/>
    <property type="evidence" value="ECO:0007669"/>
    <property type="project" value="TreeGrafter"/>
</dbReference>
<dbReference type="GO" id="GO:0006168">
    <property type="term" value="P:adenine salvage"/>
    <property type="evidence" value="ECO:0007669"/>
    <property type="project" value="InterPro"/>
</dbReference>
<dbReference type="GO" id="GO:0044209">
    <property type="term" value="P:AMP salvage"/>
    <property type="evidence" value="ECO:0007669"/>
    <property type="project" value="UniProtKB-UniRule"/>
</dbReference>
<dbReference type="GO" id="GO:0006166">
    <property type="term" value="P:purine ribonucleoside salvage"/>
    <property type="evidence" value="ECO:0007669"/>
    <property type="project" value="UniProtKB-KW"/>
</dbReference>
<dbReference type="CDD" id="cd06223">
    <property type="entry name" value="PRTases_typeI"/>
    <property type="match status" value="1"/>
</dbReference>
<dbReference type="FunFam" id="3.40.50.2020:FF:000004">
    <property type="entry name" value="Adenine phosphoribosyltransferase"/>
    <property type="match status" value="1"/>
</dbReference>
<dbReference type="Gene3D" id="3.40.50.2020">
    <property type="match status" value="1"/>
</dbReference>
<dbReference type="HAMAP" id="MF_00004">
    <property type="entry name" value="Aden_phosphoribosyltr"/>
    <property type="match status" value="1"/>
</dbReference>
<dbReference type="InterPro" id="IPR005764">
    <property type="entry name" value="Ade_phspho_trans"/>
</dbReference>
<dbReference type="InterPro" id="IPR000836">
    <property type="entry name" value="PRibTrfase_dom"/>
</dbReference>
<dbReference type="InterPro" id="IPR029057">
    <property type="entry name" value="PRTase-like"/>
</dbReference>
<dbReference type="InterPro" id="IPR050054">
    <property type="entry name" value="UPRTase/APRTase"/>
</dbReference>
<dbReference type="NCBIfam" id="TIGR01090">
    <property type="entry name" value="apt"/>
    <property type="match status" value="1"/>
</dbReference>
<dbReference type="NCBIfam" id="NF002634">
    <property type="entry name" value="PRK02304.1-3"/>
    <property type="match status" value="1"/>
</dbReference>
<dbReference type="NCBIfam" id="NF002636">
    <property type="entry name" value="PRK02304.1-5"/>
    <property type="match status" value="1"/>
</dbReference>
<dbReference type="PANTHER" id="PTHR32315">
    <property type="entry name" value="ADENINE PHOSPHORIBOSYLTRANSFERASE"/>
    <property type="match status" value="1"/>
</dbReference>
<dbReference type="PANTHER" id="PTHR32315:SF3">
    <property type="entry name" value="ADENINE PHOSPHORIBOSYLTRANSFERASE"/>
    <property type="match status" value="1"/>
</dbReference>
<dbReference type="Pfam" id="PF00156">
    <property type="entry name" value="Pribosyltran"/>
    <property type="match status" value="1"/>
</dbReference>
<dbReference type="SUPFAM" id="SSF53271">
    <property type="entry name" value="PRTase-like"/>
    <property type="match status" value="1"/>
</dbReference>
<dbReference type="PROSITE" id="PS00103">
    <property type="entry name" value="PUR_PYR_PR_TRANSFER"/>
    <property type="match status" value="1"/>
</dbReference>
<evidence type="ECO:0000255" key="1">
    <source>
        <dbReference type="HAMAP-Rule" id="MF_00004"/>
    </source>
</evidence>
<evidence type="ECO:0007829" key="2">
    <source>
        <dbReference type="PDB" id="5YW5"/>
    </source>
</evidence>
<gene>
    <name evidence="1" type="primary">apt</name>
    <name type="ordered locus">FTT_0078</name>
</gene>
<keyword id="KW-0002">3D-structure</keyword>
<keyword id="KW-0963">Cytoplasm</keyword>
<keyword id="KW-0328">Glycosyltransferase</keyword>
<keyword id="KW-0660">Purine salvage</keyword>
<keyword id="KW-1185">Reference proteome</keyword>
<keyword id="KW-0808">Transferase</keyword>
<proteinExistence type="evidence at protein level"/>
<sequence>MNLDFIKSKIAAVPDFPKPGIMFRDITPLLADPQGLRKTAEAMAQELKNKGIQPTIVAGTESRGFIFGVALAEVLGLGFVPVRKPGKLPRATYSVKYDLEYGSDSLEIHQDAFKVTDEVLVVDDLLATGGTAKATVDLIEKTQAKVAGLIFVMELDGLGGREVLAGYNVSALIKF</sequence>
<reference key="1">
    <citation type="journal article" date="2005" name="Nat. Genet.">
        <title>The complete genome sequence of Francisella tularensis, the causative agent of tularemia.</title>
        <authorList>
            <person name="Larsson P."/>
            <person name="Oyston P.C.F."/>
            <person name="Chain P."/>
            <person name="Chu M.C."/>
            <person name="Duffield M."/>
            <person name="Fuxelius H.-H."/>
            <person name="Garcia E."/>
            <person name="Haelltorp G."/>
            <person name="Johansson D."/>
            <person name="Isherwood K.E."/>
            <person name="Karp P.D."/>
            <person name="Larsson E."/>
            <person name="Liu Y."/>
            <person name="Michell S."/>
            <person name="Prior J."/>
            <person name="Prior R."/>
            <person name="Malfatti S."/>
            <person name="Sjoestedt A."/>
            <person name="Svensson K."/>
            <person name="Thompson N."/>
            <person name="Vergez L."/>
            <person name="Wagg J.K."/>
            <person name="Wren B.W."/>
            <person name="Lindler L.E."/>
            <person name="Andersson S.G.E."/>
            <person name="Forsman M."/>
            <person name="Titball R.W."/>
        </authorList>
    </citation>
    <scope>NUCLEOTIDE SEQUENCE [LARGE SCALE GENOMIC DNA]</scope>
    <source>
        <strain>SCHU S4 / Schu 4</strain>
    </source>
</reference>